<keyword id="KW-0963">Cytoplasm</keyword>
<keyword id="KW-0275">Fatty acid biosynthesis</keyword>
<keyword id="KW-0276">Fatty acid metabolism</keyword>
<keyword id="KW-0444">Lipid biosynthesis</keyword>
<keyword id="KW-0443">Lipid metabolism</keyword>
<keyword id="KW-0460">Magnesium</keyword>
<keyword id="KW-0479">Metal-binding</keyword>
<keyword id="KW-1185">Reference proteome</keyword>
<keyword id="KW-0808">Transferase</keyword>
<reference key="1">
    <citation type="submission" date="2006-08" db="EMBL/GenBank/DDBJ databases">
        <title>Complete sequence of Maricaulis maris MCS10.</title>
        <authorList>
            <consortium name="US DOE Joint Genome Institute"/>
            <person name="Copeland A."/>
            <person name="Lucas S."/>
            <person name="Lapidus A."/>
            <person name="Barry K."/>
            <person name="Detter J.C."/>
            <person name="Glavina del Rio T."/>
            <person name="Hammon N."/>
            <person name="Israni S."/>
            <person name="Dalin E."/>
            <person name="Tice H."/>
            <person name="Pitluck S."/>
            <person name="Saunders E."/>
            <person name="Brettin T."/>
            <person name="Bruce D."/>
            <person name="Han C."/>
            <person name="Tapia R."/>
            <person name="Gilna P."/>
            <person name="Schmutz J."/>
            <person name="Larimer F."/>
            <person name="Land M."/>
            <person name="Hauser L."/>
            <person name="Kyrpides N."/>
            <person name="Mikhailova N."/>
            <person name="Viollier P."/>
            <person name="Stephens C."/>
            <person name="Richardson P."/>
        </authorList>
    </citation>
    <scope>NUCLEOTIDE SEQUENCE [LARGE SCALE GENOMIC DNA]</scope>
    <source>
        <strain>MCS10</strain>
    </source>
</reference>
<feature type="chain" id="PRO_1000008449" description="Holo-[acyl-carrier-protein] synthase">
    <location>
        <begin position="1"/>
        <end position="142"/>
    </location>
</feature>
<feature type="binding site" evidence="1">
    <location>
        <position position="8"/>
    </location>
    <ligand>
        <name>Mg(2+)</name>
        <dbReference type="ChEBI" id="CHEBI:18420"/>
    </ligand>
</feature>
<feature type="binding site" evidence="1">
    <location>
        <position position="57"/>
    </location>
    <ligand>
        <name>Mg(2+)</name>
        <dbReference type="ChEBI" id="CHEBI:18420"/>
    </ligand>
</feature>
<sequence>MIIGLGSDLMDIRRIEKSIERFGDRFIQRVFTEIEQAKSDKRRMRAASYAKRFAAKEAGAKALGTGIARGVSWKEIGVVNLPSGKPTLEFKGRALERALALTPHGHEPFAHITITDDHPWAQAFVVLEARPIGHHFDGLAHG</sequence>
<dbReference type="EC" id="2.7.8.7" evidence="1"/>
<dbReference type="EMBL" id="CP000449">
    <property type="protein sequence ID" value="ABI65864.1"/>
    <property type="molecule type" value="Genomic_DNA"/>
</dbReference>
<dbReference type="RefSeq" id="WP_011643511.1">
    <property type="nucleotide sequence ID" value="NC_008347.1"/>
</dbReference>
<dbReference type="SMR" id="Q0APC3"/>
<dbReference type="STRING" id="394221.Mmar10_1572"/>
<dbReference type="KEGG" id="mmr:Mmar10_1572"/>
<dbReference type="eggNOG" id="COG0736">
    <property type="taxonomic scope" value="Bacteria"/>
</dbReference>
<dbReference type="HOGENOM" id="CLU_089696_0_2_5"/>
<dbReference type="OrthoDB" id="517356at2"/>
<dbReference type="Proteomes" id="UP000001964">
    <property type="component" value="Chromosome"/>
</dbReference>
<dbReference type="GO" id="GO:0005737">
    <property type="term" value="C:cytoplasm"/>
    <property type="evidence" value="ECO:0007669"/>
    <property type="project" value="UniProtKB-SubCell"/>
</dbReference>
<dbReference type="GO" id="GO:0008897">
    <property type="term" value="F:holo-[acyl-carrier-protein] synthase activity"/>
    <property type="evidence" value="ECO:0007669"/>
    <property type="project" value="UniProtKB-UniRule"/>
</dbReference>
<dbReference type="GO" id="GO:0000287">
    <property type="term" value="F:magnesium ion binding"/>
    <property type="evidence" value="ECO:0007669"/>
    <property type="project" value="UniProtKB-UniRule"/>
</dbReference>
<dbReference type="GO" id="GO:0006633">
    <property type="term" value="P:fatty acid biosynthetic process"/>
    <property type="evidence" value="ECO:0007669"/>
    <property type="project" value="UniProtKB-UniRule"/>
</dbReference>
<dbReference type="Gene3D" id="3.90.470.20">
    <property type="entry name" value="4'-phosphopantetheinyl transferase domain"/>
    <property type="match status" value="1"/>
</dbReference>
<dbReference type="HAMAP" id="MF_00101">
    <property type="entry name" value="AcpS"/>
    <property type="match status" value="1"/>
</dbReference>
<dbReference type="InterPro" id="IPR008278">
    <property type="entry name" value="4-PPantetheinyl_Trfase_dom"/>
</dbReference>
<dbReference type="InterPro" id="IPR037143">
    <property type="entry name" value="4-PPantetheinyl_Trfase_dom_sf"/>
</dbReference>
<dbReference type="InterPro" id="IPR002582">
    <property type="entry name" value="ACPS"/>
</dbReference>
<dbReference type="InterPro" id="IPR004568">
    <property type="entry name" value="Ppantetheine-prot_Trfase_dom"/>
</dbReference>
<dbReference type="NCBIfam" id="TIGR00516">
    <property type="entry name" value="acpS"/>
    <property type="match status" value="1"/>
</dbReference>
<dbReference type="NCBIfam" id="TIGR00556">
    <property type="entry name" value="pantethn_trn"/>
    <property type="match status" value="1"/>
</dbReference>
<dbReference type="Pfam" id="PF01648">
    <property type="entry name" value="ACPS"/>
    <property type="match status" value="1"/>
</dbReference>
<dbReference type="SUPFAM" id="SSF56214">
    <property type="entry name" value="4'-phosphopantetheinyl transferase"/>
    <property type="match status" value="1"/>
</dbReference>
<comment type="function">
    <text evidence="1">Transfers the 4'-phosphopantetheine moiety from coenzyme A to a Ser of acyl-carrier-protein.</text>
</comment>
<comment type="catalytic activity">
    <reaction evidence="1">
        <text>apo-[ACP] + CoA = holo-[ACP] + adenosine 3',5'-bisphosphate + H(+)</text>
        <dbReference type="Rhea" id="RHEA:12068"/>
        <dbReference type="Rhea" id="RHEA-COMP:9685"/>
        <dbReference type="Rhea" id="RHEA-COMP:9690"/>
        <dbReference type="ChEBI" id="CHEBI:15378"/>
        <dbReference type="ChEBI" id="CHEBI:29999"/>
        <dbReference type="ChEBI" id="CHEBI:57287"/>
        <dbReference type="ChEBI" id="CHEBI:58343"/>
        <dbReference type="ChEBI" id="CHEBI:64479"/>
        <dbReference type="EC" id="2.7.8.7"/>
    </reaction>
</comment>
<comment type="cofactor">
    <cofactor evidence="1">
        <name>Mg(2+)</name>
        <dbReference type="ChEBI" id="CHEBI:18420"/>
    </cofactor>
</comment>
<comment type="subcellular location">
    <subcellularLocation>
        <location evidence="1">Cytoplasm</location>
    </subcellularLocation>
</comment>
<comment type="similarity">
    <text evidence="1">Belongs to the P-Pant transferase superfamily. AcpS family.</text>
</comment>
<accession>Q0APC3</accession>
<gene>
    <name evidence="1" type="primary">acpS</name>
    <name type="ordered locus">Mmar10_1572</name>
</gene>
<proteinExistence type="inferred from homology"/>
<organism>
    <name type="scientific">Maricaulis maris (strain MCS10)</name>
    <name type="common">Caulobacter maris</name>
    <dbReference type="NCBI Taxonomy" id="394221"/>
    <lineage>
        <taxon>Bacteria</taxon>
        <taxon>Pseudomonadati</taxon>
        <taxon>Pseudomonadota</taxon>
        <taxon>Alphaproteobacteria</taxon>
        <taxon>Maricaulales</taxon>
        <taxon>Maricaulaceae</taxon>
        <taxon>Maricaulis</taxon>
    </lineage>
</organism>
<evidence type="ECO:0000255" key="1">
    <source>
        <dbReference type="HAMAP-Rule" id="MF_00101"/>
    </source>
</evidence>
<protein>
    <recommendedName>
        <fullName evidence="1">Holo-[acyl-carrier-protein] synthase</fullName>
        <shortName evidence="1">Holo-ACP synthase</shortName>
        <ecNumber evidence="1">2.7.8.7</ecNumber>
    </recommendedName>
    <alternativeName>
        <fullName evidence="1">4'-phosphopantetheinyl transferase AcpS</fullName>
    </alternativeName>
</protein>
<name>ACPS_MARMM</name>